<name>RL11_MOOTA</name>
<protein>
    <recommendedName>
        <fullName evidence="1">Large ribosomal subunit protein uL11</fullName>
    </recommendedName>
    <alternativeName>
        <fullName evidence="2">50S ribosomal protein L11</fullName>
    </alternativeName>
</protein>
<evidence type="ECO:0000255" key="1">
    <source>
        <dbReference type="HAMAP-Rule" id="MF_00736"/>
    </source>
</evidence>
<evidence type="ECO:0000305" key="2"/>
<keyword id="KW-0488">Methylation</keyword>
<keyword id="KW-0687">Ribonucleoprotein</keyword>
<keyword id="KW-0689">Ribosomal protein</keyword>
<keyword id="KW-0694">RNA-binding</keyword>
<keyword id="KW-0699">rRNA-binding</keyword>
<feature type="chain" id="PRO_0000258170" description="Large ribosomal subunit protein uL11">
    <location>
        <begin position="1"/>
        <end position="141"/>
    </location>
</feature>
<gene>
    <name evidence="1" type="primary">rplK</name>
    <name type="ordered locus">Moth_2472</name>
</gene>
<sequence length="141" mass="15043">MAKKVAAIVKLQVPAGKATPAPPVGPALGQHGVNIMAFVKEFNDRTASQAGLIIPVEITVYEDRSFTFITKTPPAAVLLKKALGIETASGEPNRKKVGKVSREKIREIAEMKMKDLNAASIEAAMRMIEGTARSMGVEVEA</sequence>
<comment type="function">
    <text evidence="1">Forms part of the ribosomal stalk which helps the ribosome interact with GTP-bound translation factors.</text>
</comment>
<comment type="subunit">
    <text evidence="1">Part of the ribosomal stalk of the 50S ribosomal subunit. Interacts with L10 and the large rRNA to form the base of the stalk. L10 forms an elongated spine to which L12 dimers bind in a sequential fashion forming a multimeric L10(L12)X complex.</text>
</comment>
<comment type="PTM">
    <text evidence="1">One or more lysine residues are methylated.</text>
</comment>
<comment type="similarity">
    <text evidence="1">Belongs to the universal ribosomal protein uL11 family.</text>
</comment>
<reference key="1">
    <citation type="journal article" date="2008" name="Environ. Microbiol.">
        <title>The complete genome sequence of Moorella thermoacetica (f. Clostridium thermoaceticum).</title>
        <authorList>
            <person name="Pierce E."/>
            <person name="Xie G."/>
            <person name="Barabote R.D."/>
            <person name="Saunders E."/>
            <person name="Han C.S."/>
            <person name="Detter J.C."/>
            <person name="Richardson P."/>
            <person name="Brettin T.S."/>
            <person name="Das A."/>
            <person name="Ljungdahl L.G."/>
            <person name="Ragsdale S.W."/>
        </authorList>
    </citation>
    <scope>NUCLEOTIDE SEQUENCE [LARGE SCALE GENOMIC DNA]</scope>
    <source>
        <strain>ATCC 39073 / JCM 9320</strain>
    </source>
</reference>
<dbReference type="EMBL" id="CP000232">
    <property type="protein sequence ID" value="ABC20754.1"/>
    <property type="molecule type" value="Genomic_DNA"/>
</dbReference>
<dbReference type="RefSeq" id="YP_431297.1">
    <property type="nucleotide sequence ID" value="NC_007644.1"/>
</dbReference>
<dbReference type="SMR" id="Q2RFN5"/>
<dbReference type="STRING" id="264732.Moth_2472"/>
<dbReference type="EnsemblBacteria" id="ABC20754">
    <property type="protein sequence ID" value="ABC20754"/>
    <property type="gene ID" value="Moth_2472"/>
</dbReference>
<dbReference type="KEGG" id="mta:Moth_2472"/>
<dbReference type="PATRIC" id="fig|264732.11.peg.2690"/>
<dbReference type="eggNOG" id="COG0080">
    <property type="taxonomic scope" value="Bacteria"/>
</dbReference>
<dbReference type="HOGENOM" id="CLU_074237_2_1_9"/>
<dbReference type="OrthoDB" id="9802408at2"/>
<dbReference type="GO" id="GO:0022625">
    <property type="term" value="C:cytosolic large ribosomal subunit"/>
    <property type="evidence" value="ECO:0007669"/>
    <property type="project" value="TreeGrafter"/>
</dbReference>
<dbReference type="GO" id="GO:0070180">
    <property type="term" value="F:large ribosomal subunit rRNA binding"/>
    <property type="evidence" value="ECO:0007669"/>
    <property type="project" value="UniProtKB-UniRule"/>
</dbReference>
<dbReference type="GO" id="GO:0003735">
    <property type="term" value="F:structural constituent of ribosome"/>
    <property type="evidence" value="ECO:0007669"/>
    <property type="project" value="InterPro"/>
</dbReference>
<dbReference type="GO" id="GO:0006412">
    <property type="term" value="P:translation"/>
    <property type="evidence" value="ECO:0007669"/>
    <property type="project" value="UniProtKB-UniRule"/>
</dbReference>
<dbReference type="CDD" id="cd00349">
    <property type="entry name" value="Ribosomal_L11"/>
    <property type="match status" value="1"/>
</dbReference>
<dbReference type="FunFam" id="1.10.10.250:FF:000001">
    <property type="entry name" value="50S ribosomal protein L11"/>
    <property type="match status" value="1"/>
</dbReference>
<dbReference type="FunFam" id="3.30.1550.10:FF:000001">
    <property type="entry name" value="50S ribosomal protein L11"/>
    <property type="match status" value="1"/>
</dbReference>
<dbReference type="Gene3D" id="1.10.10.250">
    <property type="entry name" value="Ribosomal protein L11, C-terminal domain"/>
    <property type="match status" value="1"/>
</dbReference>
<dbReference type="Gene3D" id="3.30.1550.10">
    <property type="entry name" value="Ribosomal protein L11/L12, N-terminal domain"/>
    <property type="match status" value="1"/>
</dbReference>
<dbReference type="HAMAP" id="MF_00736">
    <property type="entry name" value="Ribosomal_uL11"/>
    <property type="match status" value="1"/>
</dbReference>
<dbReference type="InterPro" id="IPR000911">
    <property type="entry name" value="Ribosomal_uL11"/>
</dbReference>
<dbReference type="InterPro" id="IPR006519">
    <property type="entry name" value="Ribosomal_uL11_bac-typ"/>
</dbReference>
<dbReference type="InterPro" id="IPR020783">
    <property type="entry name" value="Ribosomal_uL11_C"/>
</dbReference>
<dbReference type="InterPro" id="IPR036769">
    <property type="entry name" value="Ribosomal_uL11_C_sf"/>
</dbReference>
<dbReference type="InterPro" id="IPR020785">
    <property type="entry name" value="Ribosomal_uL11_CS"/>
</dbReference>
<dbReference type="InterPro" id="IPR020784">
    <property type="entry name" value="Ribosomal_uL11_N"/>
</dbReference>
<dbReference type="InterPro" id="IPR036796">
    <property type="entry name" value="Ribosomal_uL11_N_sf"/>
</dbReference>
<dbReference type="NCBIfam" id="TIGR01632">
    <property type="entry name" value="L11_bact"/>
    <property type="match status" value="1"/>
</dbReference>
<dbReference type="PANTHER" id="PTHR11661">
    <property type="entry name" value="60S RIBOSOMAL PROTEIN L12"/>
    <property type="match status" value="1"/>
</dbReference>
<dbReference type="PANTHER" id="PTHR11661:SF1">
    <property type="entry name" value="LARGE RIBOSOMAL SUBUNIT PROTEIN UL11M"/>
    <property type="match status" value="1"/>
</dbReference>
<dbReference type="Pfam" id="PF00298">
    <property type="entry name" value="Ribosomal_L11"/>
    <property type="match status" value="1"/>
</dbReference>
<dbReference type="Pfam" id="PF03946">
    <property type="entry name" value="Ribosomal_L11_N"/>
    <property type="match status" value="1"/>
</dbReference>
<dbReference type="SMART" id="SM00649">
    <property type="entry name" value="RL11"/>
    <property type="match status" value="1"/>
</dbReference>
<dbReference type="SUPFAM" id="SSF54747">
    <property type="entry name" value="Ribosomal L11/L12e N-terminal domain"/>
    <property type="match status" value="1"/>
</dbReference>
<dbReference type="SUPFAM" id="SSF46906">
    <property type="entry name" value="Ribosomal protein L11, C-terminal domain"/>
    <property type="match status" value="1"/>
</dbReference>
<dbReference type="PROSITE" id="PS00359">
    <property type="entry name" value="RIBOSOMAL_L11"/>
    <property type="match status" value="1"/>
</dbReference>
<organism>
    <name type="scientific">Moorella thermoacetica (strain ATCC 39073 / JCM 9320)</name>
    <dbReference type="NCBI Taxonomy" id="264732"/>
    <lineage>
        <taxon>Bacteria</taxon>
        <taxon>Bacillati</taxon>
        <taxon>Bacillota</taxon>
        <taxon>Clostridia</taxon>
        <taxon>Moorellales</taxon>
        <taxon>Moorellaceae</taxon>
        <taxon>Moorella</taxon>
    </lineage>
</organism>
<accession>Q2RFN5</accession>
<proteinExistence type="inferred from homology"/>